<dbReference type="EMBL" id="CU468135">
    <property type="protein sequence ID" value="CAO97700.1"/>
    <property type="molecule type" value="Genomic_DNA"/>
</dbReference>
<dbReference type="RefSeq" id="WP_012442362.1">
    <property type="nucleotide sequence ID" value="NC_010694.1"/>
</dbReference>
<dbReference type="SMR" id="B2VHI1"/>
<dbReference type="STRING" id="465817.ETA_26540"/>
<dbReference type="KEGG" id="eta:ETA_26540"/>
<dbReference type="eggNOG" id="COG0335">
    <property type="taxonomic scope" value="Bacteria"/>
</dbReference>
<dbReference type="HOGENOM" id="CLU_103507_2_1_6"/>
<dbReference type="OrthoDB" id="9803541at2"/>
<dbReference type="Proteomes" id="UP000001726">
    <property type="component" value="Chromosome"/>
</dbReference>
<dbReference type="GO" id="GO:0022625">
    <property type="term" value="C:cytosolic large ribosomal subunit"/>
    <property type="evidence" value="ECO:0007669"/>
    <property type="project" value="TreeGrafter"/>
</dbReference>
<dbReference type="GO" id="GO:0003735">
    <property type="term" value="F:structural constituent of ribosome"/>
    <property type="evidence" value="ECO:0007669"/>
    <property type="project" value="InterPro"/>
</dbReference>
<dbReference type="GO" id="GO:0006412">
    <property type="term" value="P:translation"/>
    <property type="evidence" value="ECO:0007669"/>
    <property type="project" value="UniProtKB-UniRule"/>
</dbReference>
<dbReference type="FunFam" id="2.30.30.790:FF:000001">
    <property type="entry name" value="50S ribosomal protein L19"/>
    <property type="match status" value="1"/>
</dbReference>
<dbReference type="Gene3D" id="2.30.30.790">
    <property type="match status" value="1"/>
</dbReference>
<dbReference type="HAMAP" id="MF_00402">
    <property type="entry name" value="Ribosomal_bL19"/>
    <property type="match status" value="1"/>
</dbReference>
<dbReference type="InterPro" id="IPR001857">
    <property type="entry name" value="Ribosomal_bL19"/>
</dbReference>
<dbReference type="InterPro" id="IPR018257">
    <property type="entry name" value="Ribosomal_bL19_CS"/>
</dbReference>
<dbReference type="InterPro" id="IPR038657">
    <property type="entry name" value="Ribosomal_bL19_sf"/>
</dbReference>
<dbReference type="InterPro" id="IPR008991">
    <property type="entry name" value="Translation_prot_SH3-like_sf"/>
</dbReference>
<dbReference type="NCBIfam" id="TIGR01024">
    <property type="entry name" value="rplS_bact"/>
    <property type="match status" value="1"/>
</dbReference>
<dbReference type="PANTHER" id="PTHR15680:SF9">
    <property type="entry name" value="LARGE RIBOSOMAL SUBUNIT PROTEIN BL19M"/>
    <property type="match status" value="1"/>
</dbReference>
<dbReference type="PANTHER" id="PTHR15680">
    <property type="entry name" value="RIBOSOMAL PROTEIN L19"/>
    <property type="match status" value="1"/>
</dbReference>
<dbReference type="Pfam" id="PF01245">
    <property type="entry name" value="Ribosomal_L19"/>
    <property type="match status" value="1"/>
</dbReference>
<dbReference type="PIRSF" id="PIRSF002191">
    <property type="entry name" value="Ribosomal_L19"/>
    <property type="match status" value="1"/>
</dbReference>
<dbReference type="PRINTS" id="PR00061">
    <property type="entry name" value="RIBOSOMALL19"/>
</dbReference>
<dbReference type="SUPFAM" id="SSF50104">
    <property type="entry name" value="Translation proteins SH3-like domain"/>
    <property type="match status" value="1"/>
</dbReference>
<dbReference type="PROSITE" id="PS01015">
    <property type="entry name" value="RIBOSOMAL_L19"/>
    <property type="match status" value="1"/>
</dbReference>
<accession>B2VHI1</accession>
<gene>
    <name evidence="1" type="primary">rplS</name>
    <name type="ordered locus">ETA_26540</name>
</gene>
<name>RL19_ERWT9</name>
<comment type="function">
    <text evidence="1">This protein is located at the 30S-50S ribosomal subunit interface and may play a role in the structure and function of the aminoacyl-tRNA binding site.</text>
</comment>
<comment type="similarity">
    <text evidence="1">Belongs to the bacterial ribosomal protein bL19 family.</text>
</comment>
<sequence length="115" mass="13072">MSNIIKQIEQEQLKQDVPSFRPGDSVEVKVWVVEGAKKRLQAFEGVVIAIRNRGLHSAFTVRKISNGEGVERVFQTHSPVIDSITVKRRGAVRQAKLYYLRERTGKSARIKERLG</sequence>
<proteinExistence type="inferred from homology"/>
<evidence type="ECO:0000255" key="1">
    <source>
        <dbReference type="HAMAP-Rule" id="MF_00402"/>
    </source>
</evidence>
<evidence type="ECO:0000305" key="2"/>
<protein>
    <recommendedName>
        <fullName evidence="1">Large ribosomal subunit protein bL19</fullName>
    </recommendedName>
    <alternativeName>
        <fullName evidence="2">50S ribosomal protein L19</fullName>
    </alternativeName>
</protein>
<organism>
    <name type="scientific">Erwinia tasmaniensis (strain DSM 17950 / CFBP 7177 / CIP 109463 / NCPPB 4357 / Et1/99)</name>
    <dbReference type="NCBI Taxonomy" id="465817"/>
    <lineage>
        <taxon>Bacteria</taxon>
        <taxon>Pseudomonadati</taxon>
        <taxon>Pseudomonadota</taxon>
        <taxon>Gammaproteobacteria</taxon>
        <taxon>Enterobacterales</taxon>
        <taxon>Erwiniaceae</taxon>
        <taxon>Erwinia</taxon>
    </lineage>
</organism>
<reference key="1">
    <citation type="journal article" date="2008" name="Environ. Microbiol.">
        <title>The genome of Erwinia tasmaniensis strain Et1/99, a non-pathogenic bacterium in the genus Erwinia.</title>
        <authorList>
            <person name="Kube M."/>
            <person name="Migdoll A.M."/>
            <person name="Mueller I."/>
            <person name="Kuhl H."/>
            <person name="Beck A."/>
            <person name="Reinhardt R."/>
            <person name="Geider K."/>
        </authorList>
    </citation>
    <scope>NUCLEOTIDE SEQUENCE [LARGE SCALE GENOMIC DNA]</scope>
    <source>
        <strain>DSM 17950 / CFBP 7177 / CIP 109463 / NCPPB 4357 / Et1/99</strain>
    </source>
</reference>
<keyword id="KW-1185">Reference proteome</keyword>
<keyword id="KW-0687">Ribonucleoprotein</keyword>
<keyword id="KW-0689">Ribosomal protein</keyword>
<feature type="chain" id="PRO_1000193828" description="Large ribosomal subunit protein bL19">
    <location>
        <begin position="1"/>
        <end position="115"/>
    </location>
</feature>